<dbReference type="EMBL" id="AY653733">
    <property type="protein sequence ID" value="AAV50515.1"/>
    <property type="molecule type" value="Genomic_DNA"/>
</dbReference>
<dbReference type="KEGG" id="vg:9924849"/>
<dbReference type="Proteomes" id="UP000001134">
    <property type="component" value="Genome"/>
</dbReference>
<evidence type="ECO:0000305" key="1"/>
<keyword id="KW-1185">Reference proteome</keyword>
<name>YL242_MIMIV</name>
<organismHost>
    <name type="scientific">Acanthamoeba polyphaga</name>
    <name type="common">Amoeba</name>
    <dbReference type="NCBI Taxonomy" id="5757"/>
</organismHost>
<accession>Q5UPS9</accession>
<comment type="similarity">
    <text evidence="1">Belongs to the mimivirus L242/L243 family.</text>
</comment>
<feature type="chain" id="PRO_0000071249" description="Uncharacterized protein L242">
    <location>
        <begin position="1"/>
        <end position="163"/>
    </location>
</feature>
<organism>
    <name type="scientific">Acanthamoeba polyphaga mimivirus</name>
    <name type="common">APMV</name>
    <dbReference type="NCBI Taxonomy" id="212035"/>
    <lineage>
        <taxon>Viruses</taxon>
        <taxon>Varidnaviria</taxon>
        <taxon>Bamfordvirae</taxon>
        <taxon>Nucleocytoviricota</taxon>
        <taxon>Megaviricetes</taxon>
        <taxon>Imitervirales</taxon>
        <taxon>Mimiviridae</taxon>
        <taxon>Megamimivirinae</taxon>
        <taxon>Mimivirus</taxon>
        <taxon>Mimivirus bradfordmassiliense</taxon>
    </lineage>
</organism>
<reference key="1">
    <citation type="journal article" date="2004" name="Science">
        <title>The 1.2-megabase genome sequence of Mimivirus.</title>
        <authorList>
            <person name="Raoult D."/>
            <person name="Audic S."/>
            <person name="Robert C."/>
            <person name="Abergel C."/>
            <person name="Renesto P."/>
            <person name="Ogata H."/>
            <person name="La Scola B."/>
            <person name="Susan M."/>
            <person name="Claverie J.-M."/>
        </authorList>
    </citation>
    <scope>NUCLEOTIDE SEQUENCE [LARGE SCALE GENOMIC DNA]</scope>
    <source>
        <strain>Rowbotham-Bradford</strain>
    </source>
</reference>
<proteinExistence type="inferred from homology"/>
<protein>
    <recommendedName>
        <fullName>Uncharacterized protein L242</fullName>
    </recommendedName>
</protein>
<gene>
    <name type="ordered locus">MIMI_L242</name>
</gene>
<sequence>MSDWCYLNSEEKDKLIDKLYKKLIKKGRVVCEVSDIRHRIYKRLEYNGHKFERKIIGYEPGVISLSREHNTELEWNLWKIAGWINSKRITKEELELACETHNMMYPKRKVKVSSIEEAFDGELSIGQIYYLIQDKWKKVVDKNPNPFDYCNLRDTIVKIKLVK</sequence>